<protein>
    <recommendedName>
        <fullName evidence="1">Ferrochelatase</fullName>
        <ecNumber evidence="1">4.98.1.1</ecNumber>
    </recommendedName>
    <alternativeName>
        <fullName evidence="1">Heme synthase</fullName>
    </alternativeName>
    <alternativeName>
        <fullName evidence="1">Protoheme ferro-lyase</fullName>
    </alternativeName>
</protein>
<feature type="chain" id="PRO_1000019282" description="Ferrochelatase">
    <location>
        <begin position="1"/>
        <end position="367"/>
    </location>
</feature>
<feature type="binding site" evidence="1">
    <location>
        <position position="226"/>
    </location>
    <ligand>
        <name>Fe cation</name>
        <dbReference type="ChEBI" id="CHEBI:24875"/>
    </ligand>
</feature>
<feature type="binding site" evidence="1">
    <location>
        <position position="307"/>
    </location>
    <ligand>
        <name>Fe cation</name>
        <dbReference type="ChEBI" id="CHEBI:24875"/>
    </ligand>
</feature>
<name>HEMH_BURP0</name>
<dbReference type="EC" id="4.98.1.1" evidence="1"/>
<dbReference type="EMBL" id="CP000572">
    <property type="protein sequence ID" value="ABN91419.1"/>
    <property type="molecule type" value="Genomic_DNA"/>
</dbReference>
<dbReference type="SMR" id="A3NYY2"/>
<dbReference type="KEGG" id="bpl:BURPS1106A_3316"/>
<dbReference type="HOGENOM" id="CLU_018884_0_0_4"/>
<dbReference type="UniPathway" id="UPA00252">
    <property type="reaction ID" value="UER00325"/>
</dbReference>
<dbReference type="Proteomes" id="UP000006738">
    <property type="component" value="Chromosome I"/>
</dbReference>
<dbReference type="GO" id="GO:0005737">
    <property type="term" value="C:cytoplasm"/>
    <property type="evidence" value="ECO:0007669"/>
    <property type="project" value="UniProtKB-SubCell"/>
</dbReference>
<dbReference type="GO" id="GO:0004325">
    <property type="term" value="F:ferrochelatase activity"/>
    <property type="evidence" value="ECO:0007669"/>
    <property type="project" value="UniProtKB-UniRule"/>
</dbReference>
<dbReference type="GO" id="GO:0046872">
    <property type="term" value="F:metal ion binding"/>
    <property type="evidence" value="ECO:0007669"/>
    <property type="project" value="UniProtKB-KW"/>
</dbReference>
<dbReference type="GO" id="GO:0006783">
    <property type="term" value="P:heme biosynthetic process"/>
    <property type="evidence" value="ECO:0007669"/>
    <property type="project" value="UniProtKB-UniRule"/>
</dbReference>
<dbReference type="CDD" id="cd00419">
    <property type="entry name" value="Ferrochelatase_C"/>
    <property type="match status" value="1"/>
</dbReference>
<dbReference type="CDD" id="cd03411">
    <property type="entry name" value="Ferrochelatase_N"/>
    <property type="match status" value="1"/>
</dbReference>
<dbReference type="FunFam" id="3.40.50.1400:FF:000002">
    <property type="entry name" value="Ferrochelatase"/>
    <property type="match status" value="1"/>
</dbReference>
<dbReference type="Gene3D" id="3.40.50.1400">
    <property type="match status" value="2"/>
</dbReference>
<dbReference type="HAMAP" id="MF_00323">
    <property type="entry name" value="Ferrochelatase"/>
    <property type="match status" value="1"/>
</dbReference>
<dbReference type="InterPro" id="IPR001015">
    <property type="entry name" value="Ferrochelatase"/>
</dbReference>
<dbReference type="InterPro" id="IPR019772">
    <property type="entry name" value="Ferrochelatase_AS"/>
</dbReference>
<dbReference type="InterPro" id="IPR033644">
    <property type="entry name" value="Ferrochelatase_C"/>
</dbReference>
<dbReference type="InterPro" id="IPR033659">
    <property type="entry name" value="Ferrochelatase_N"/>
</dbReference>
<dbReference type="NCBIfam" id="TIGR00109">
    <property type="entry name" value="hemH"/>
    <property type="match status" value="1"/>
</dbReference>
<dbReference type="PANTHER" id="PTHR11108">
    <property type="entry name" value="FERROCHELATASE"/>
    <property type="match status" value="1"/>
</dbReference>
<dbReference type="PANTHER" id="PTHR11108:SF1">
    <property type="entry name" value="FERROCHELATASE, MITOCHONDRIAL"/>
    <property type="match status" value="1"/>
</dbReference>
<dbReference type="Pfam" id="PF00762">
    <property type="entry name" value="Ferrochelatase"/>
    <property type="match status" value="1"/>
</dbReference>
<dbReference type="SUPFAM" id="SSF53800">
    <property type="entry name" value="Chelatase"/>
    <property type="match status" value="1"/>
</dbReference>
<dbReference type="PROSITE" id="PS00534">
    <property type="entry name" value="FERROCHELATASE"/>
    <property type="match status" value="1"/>
</dbReference>
<reference key="1">
    <citation type="journal article" date="2010" name="Genome Biol. Evol.">
        <title>Continuing evolution of Burkholderia mallei through genome reduction and large-scale rearrangements.</title>
        <authorList>
            <person name="Losada L."/>
            <person name="Ronning C.M."/>
            <person name="DeShazer D."/>
            <person name="Woods D."/>
            <person name="Fedorova N."/>
            <person name="Kim H.S."/>
            <person name="Shabalina S.A."/>
            <person name="Pearson T.R."/>
            <person name="Brinkac L."/>
            <person name="Tan P."/>
            <person name="Nandi T."/>
            <person name="Crabtree J."/>
            <person name="Badger J."/>
            <person name="Beckstrom-Sternberg S."/>
            <person name="Saqib M."/>
            <person name="Schutzer S.E."/>
            <person name="Keim P."/>
            <person name="Nierman W.C."/>
        </authorList>
    </citation>
    <scope>NUCLEOTIDE SEQUENCE [LARGE SCALE GENOMIC DNA]</scope>
    <source>
        <strain>1106a</strain>
    </source>
</reference>
<sequence>MSFDSVPRHALSMRFDLEPPSHASAAHRVAVLLVNLGTPDAPTPRAVRRYLAQFLSDPRVVEIPQLVWQVILRTLILPLRGRASAKKYAAVWLPEGSPLRVYTERQVESVKPLFAANGYRVIVDYAMRYGTPSIADVLAQLKRAGAERVLLLPMYPQYSSSTTATAFDAAFAALGRMRNQPEVRTVRHYADHPAYIHALAEQVRQYWAAHGRPAFDAGDKLVLSFHGVPKRTLDLGDPYHDQCQQTAALLMSALGLTTFECRVTFQSRFGKAEWLQPYTAPTLKELGAAGVRRADVFCPGFTADCLETIEEIGIEVRDEFVHGGGKEFHRIPCLNASPAWIAALGEIAAENLQGWPVRVAMAPEAVS</sequence>
<accession>A3NYY2</accession>
<keyword id="KW-0963">Cytoplasm</keyword>
<keyword id="KW-0350">Heme biosynthesis</keyword>
<keyword id="KW-0408">Iron</keyword>
<keyword id="KW-0456">Lyase</keyword>
<keyword id="KW-0479">Metal-binding</keyword>
<keyword id="KW-0627">Porphyrin biosynthesis</keyword>
<evidence type="ECO:0000255" key="1">
    <source>
        <dbReference type="HAMAP-Rule" id="MF_00323"/>
    </source>
</evidence>
<gene>
    <name evidence="1" type="primary">hemH</name>
    <name type="ordered locus">BURPS1106A_3316</name>
</gene>
<organism>
    <name type="scientific">Burkholderia pseudomallei (strain 1106a)</name>
    <dbReference type="NCBI Taxonomy" id="357348"/>
    <lineage>
        <taxon>Bacteria</taxon>
        <taxon>Pseudomonadati</taxon>
        <taxon>Pseudomonadota</taxon>
        <taxon>Betaproteobacteria</taxon>
        <taxon>Burkholderiales</taxon>
        <taxon>Burkholderiaceae</taxon>
        <taxon>Burkholderia</taxon>
        <taxon>pseudomallei group</taxon>
    </lineage>
</organism>
<proteinExistence type="inferred from homology"/>
<comment type="function">
    <text evidence="1">Catalyzes the ferrous insertion into protoporphyrin IX.</text>
</comment>
<comment type="catalytic activity">
    <reaction evidence="1">
        <text>heme b + 2 H(+) = protoporphyrin IX + Fe(2+)</text>
        <dbReference type="Rhea" id="RHEA:22584"/>
        <dbReference type="ChEBI" id="CHEBI:15378"/>
        <dbReference type="ChEBI" id="CHEBI:29033"/>
        <dbReference type="ChEBI" id="CHEBI:57306"/>
        <dbReference type="ChEBI" id="CHEBI:60344"/>
        <dbReference type="EC" id="4.98.1.1"/>
    </reaction>
</comment>
<comment type="pathway">
    <text evidence="1">Porphyrin-containing compound metabolism; protoheme biosynthesis; protoheme from protoporphyrin-IX: step 1/1.</text>
</comment>
<comment type="subcellular location">
    <subcellularLocation>
        <location evidence="1">Cytoplasm</location>
    </subcellularLocation>
</comment>
<comment type="similarity">
    <text evidence="1">Belongs to the ferrochelatase family.</text>
</comment>